<comment type="function">
    <text evidence="2">Part of an unusual four-component transporter, which is required for protection against the killing factor SdpC (sporulation-delaying protein).</text>
</comment>
<comment type="subunit">
    <text evidence="2">Part of a complex composed of YknX, YknY and YknZ. The complex interacts with YknW.</text>
</comment>
<comment type="interaction">
    <interactant intactId="EBI-6418873">
        <id>O31710</id>
    </interactant>
    <interactant intactId="EBI-6418873">
        <id>O31710</id>
        <label>yknX</label>
    </interactant>
    <organismsDiffer>false</organismsDiffer>
    <experiments>2</experiments>
</comment>
<comment type="subcellular location">
    <subcellularLocation>
        <location evidence="2">Cell membrane</location>
        <topology evidence="1">Single-pass membrane protein</topology>
    </subcellularLocation>
</comment>
<comment type="induction">
    <text evidence="2">Expressed in exponential-phase cells.</text>
</comment>
<comment type="similarity">
    <text evidence="3">Belongs to the membrane fusion protein (MFP) (TC 8.A.1) family.</text>
</comment>
<gene>
    <name type="primary">yknX</name>
    <name evidence="4" type="ordered locus">BSU14350</name>
</gene>
<evidence type="ECO:0000255" key="1"/>
<evidence type="ECO:0000269" key="2">
    <source>
    </source>
</evidence>
<evidence type="ECO:0000305" key="3"/>
<evidence type="ECO:0000312" key="4">
    <source>
        <dbReference type="EMBL" id="CAB13308.1"/>
    </source>
</evidence>
<keyword id="KW-1003">Cell membrane</keyword>
<keyword id="KW-0175">Coiled coil</keyword>
<keyword id="KW-0472">Membrane</keyword>
<keyword id="KW-1185">Reference proteome</keyword>
<keyword id="KW-0812">Transmembrane</keyword>
<keyword id="KW-1133">Transmembrane helix</keyword>
<dbReference type="EMBL" id="AF012285">
    <property type="protein sequence ID" value="AAC24909.1"/>
    <property type="molecule type" value="Genomic_DNA"/>
</dbReference>
<dbReference type="EMBL" id="AL009126">
    <property type="protein sequence ID" value="CAB13308.1"/>
    <property type="molecule type" value="Genomic_DNA"/>
</dbReference>
<dbReference type="PIR" id="C69858">
    <property type="entry name" value="C69858"/>
</dbReference>
<dbReference type="RefSeq" id="WP_003244902.1">
    <property type="nucleotide sequence ID" value="NZ_OZ025638.1"/>
</dbReference>
<dbReference type="SMR" id="O31710"/>
<dbReference type="FunCoup" id="O31710">
    <property type="interactions" value="171"/>
</dbReference>
<dbReference type="STRING" id="224308.BSU14350"/>
<dbReference type="TCDB" id="3.A.1.122.2">
    <property type="family name" value="the atp-binding cassette (abc) superfamily"/>
</dbReference>
<dbReference type="PaxDb" id="224308-BSU14350"/>
<dbReference type="EnsemblBacteria" id="CAB13308">
    <property type="protein sequence ID" value="CAB13308"/>
    <property type="gene ID" value="BSU_14350"/>
</dbReference>
<dbReference type="GeneID" id="938774"/>
<dbReference type="KEGG" id="bsu:BSU14350"/>
<dbReference type="PATRIC" id="fig|224308.179.peg.1565"/>
<dbReference type="eggNOG" id="COG0845">
    <property type="taxonomic scope" value="Bacteria"/>
</dbReference>
<dbReference type="InParanoid" id="O31710"/>
<dbReference type="OrthoDB" id="85226at2"/>
<dbReference type="PhylomeDB" id="O31710"/>
<dbReference type="BioCyc" id="BSUB:BSU14350-MONOMER"/>
<dbReference type="Proteomes" id="UP000001570">
    <property type="component" value="Chromosome"/>
</dbReference>
<dbReference type="GO" id="GO:0005886">
    <property type="term" value="C:plasma membrane"/>
    <property type="evidence" value="ECO:0007669"/>
    <property type="project" value="UniProtKB-SubCell"/>
</dbReference>
<dbReference type="GO" id="GO:0042802">
    <property type="term" value="F:identical protein binding"/>
    <property type="evidence" value="ECO:0000353"/>
    <property type="project" value="IntAct"/>
</dbReference>
<dbReference type="GO" id="GO:0022857">
    <property type="term" value="F:transmembrane transporter activity"/>
    <property type="evidence" value="ECO:0007669"/>
    <property type="project" value="InterPro"/>
</dbReference>
<dbReference type="Gene3D" id="2.40.30.170">
    <property type="match status" value="1"/>
</dbReference>
<dbReference type="Gene3D" id="2.40.420.20">
    <property type="match status" value="1"/>
</dbReference>
<dbReference type="Gene3D" id="2.40.50.100">
    <property type="match status" value="1"/>
</dbReference>
<dbReference type="InterPro" id="IPR032317">
    <property type="entry name" value="CusB_D23"/>
</dbReference>
<dbReference type="InterPro" id="IPR006143">
    <property type="entry name" value="RND_pump_MFP"/>
</dbReference>
<dbReference type="InterPro" id="IPR050465">
    <property type="entry name" value="UPF0194_transport"/>
</dbReference>
<dbReference type="NCBIfam" id="TIGR01730">
    <property type="entry name" value="RND_mfp"/>
    <property type="match status" value="1"/>
</dbReference>
<dbReference type="PANTHER" id="PTHR32347">
    <property type="entry name" value="EFFLUX SYSTEM COMPONENT YKNX-RELATED"/>
    <property type="match status" value="1"/>
</dbReference>
<dbReference type="PANTHER" id="PTHR32347:SF14">
    <property type="entry name" value="EFFLUX SYSTEM COMPONENT YKNX-RELATED"/>
    <property type="match status" value="1"/>
</dbReference>
<dbReference type="Pfam" id="PF16576">
    <property type="entry name" value="HlyD_D23"/>
    <property type="match status" value="1"/>
</dbReference>
<sequence length="377" mass="41707">MKKVWIGIGIAVIVALFVGINIYRSAAPTSGSAGKEVQTGSVEENEISSTVMVPGTLKFSNEQYVFYEADKGTLEDIKVKEGDKVKKGTALVTYTNEQLSLEKEQNQLTSESNRLQIDQIQEKLKALDSKERELEKQVGKKEAEKQIESERTELQMQKKTAEIELKQTELQRQSLANRVSDLEVKSEIEGTVISVNQEAASKKSDIQEPVIHIGNPKDLVVSGKLSEYDTLKVKKGQKVTLTSDVIQGKTWKGTVSAVGLVPDQQESAAAQGTEQAVQYPLQVKIKGNLPEGKPGFKFIMNIETDKRKANTLPSKAVKKEDDQYYVYTVKDGKAKRVDVKIGEVTDDLTEIKEGLTQDDQVILNPSDQVTDGMEVKS</sequence>
<protein>
    <recommendedName>
        <fullName evidence="3">Putative efflux system component YknX</fullName>
    </recommendedName>
</protein>
<reference key="1">
    <citation type="submission" date="1997-07" db="EMBL/GenBank/DDBJ databases">
        <title>Sequence analysis of the mobA-ampS region of the Bacillus subtilis chromosome.</title>
        <authorList>
            <person name="Caldwell R.M."/>
            <person name="Ferrari E."/>
        </authorList>
    </citation>
    <scope>NUCLEOTIDE SEQUENCE [GENOMIC DNA]</scope>
    <source>
        <strain>168</strain>
    </source>
</reference>
<reference key="2">
    <citation type="journal article" date="1997" name="Nature">
        <title>The complete genome sequence of the Gram-positive bacterium Bacillus subtilis.</title>
        <authorList>
            <person name="Kunst F."/>
            <person name="Ogasawara N."/>
            <person name="Moszer I."/>
            <person name="Albertini A.M."/>
            <person name="Alloni G."/>
            <person name="Azevedo V."/>
            <person name="Bertero M.G."/>
            <person name="Bessieres P."/>
            <person name="Bolotin A."/>
            <person name="Borchert S."/>
            <person name="Borriss R."/>
            <person name="Boursier L."/>
            <person name="Brans A."/>
            <person name="Braun M."/>
            <person name="Brignell S.C."/>
            <person name="Bron S."/>
            <person name="Brouillet S."/>
            <person name="Bruschi C.V."/>
            <person name="Caldwell B."/>
            <person name="Capuano V."/>
            <person name="Carter N.M."/>
            <person name="Choi S.-K."/>
            <person name="Codani J.-J."/>
            <person name="Connerton I.F."/>
            <person name="Cummings N.J."/>
            <person name="Daniel R.A."/>
            <person name="Denizot F."/>
            <person name="Devine K.M."/>
            <person name="Duesterhoeft A."/>
            <person name="Ehrlich S.D."/>
            <person name="Emmerson P.T."/>
            <person name="Entian K.-D."/>
            <person name="Errington J."/>
            <person name="Fabret C."/>
            <person name="Ferrari E."/>
            <person name="Foulger D."/>
            <person name="Fritz C."/>
            <person name="Fujita M."/>
            <person name="Fujita Y."/>
            <person name="Fuma S."/>
            <person name="Galizzi A."/>
            <person name="Galleron N."/>
            <person name="Ghim S.-Y."/>
            <person name="Glaser P."/>
            <person name="Goffeau A."/>
            <person name="Golightly E.J."/>
            <person name="Grandi G."/>
            <person name="Guiseppi G."/>
            <person name="Guy B.J."/>
            <person name="Haga K."/>
            <person name="Haiech J."/>
            <person name="Harwood C.R."/>
            <person name="Henaut A."/>
            <person name="Hilbert H."/>
            <person name="Holsappel S."/>
            <person name="Hosono S."/>
            <person name="Hullo M.-F."/>
            <person name="Itaya M."/>
            <person name="Jones L.-M."/>
            <person name="Joris B."/>
            <person name="Karamata D."/>
            <person name="Kasahara Y."/>
            <person name="Klaerr-Blanchard M."/>
            <person name="Klein C."/>
            <person name="Kobayashi Y."/>
            <person name="Koetter P."/>
            <person name="Koningstein G."/>
            <person name="Krogh S."/>
            <person name="Kumano M."/>
            <person name="Kurita K."/>
            <person name="Lapidus A."/>
            <person name="Lardinois S."/>
            <person name="Lauber J."/>
            <person name="Lazarevic V."/>
            <person name="Lee S.-M."/>
            <person name="Levine A."/>
            <person name="Liu H."/>
            <person name="Masuda S."/>
            <person name="Mauel C."/>
            <person name="Medigue C."/>
            <person name="Medina N."/>
            <person name="Mellado R.P."/>
            <person name="Mizuno M."/>
            <person name="Moestl D."/>
            <person name="Nakai S."/>
            <person name="Noback M."/>
            <person name="Noone D."/>
            <person name="O'Reilly M."/>
            <person name="Ogawa K."/>
            <person name="Ogiwara A."/>
            <person name="Oudega B."/>
            <person name="Park S.-H."/>
            <person name="Parro V."/>
            <person name="Pohl T.M."/>
            <person name="Portetelle D."/>
            <person name="Porwollik S."/>
            <person name="Prescott A.M."/>
            <person name="Presecan E."/>
            <person name="Pujic P."/>
            <person name="Purnelle B."/>
            <person name="Rapoport G."/>
            <person name="Rey M."/>
            <person name="Reynolds S."/>
            <person name="Rieger M."/>
            <person name="Rivolta C."/>
            <person name="Rocha E."/>
            <person name="Roche B."/>
            <person name="Rose M."/>
            <person name="Sadaie Y."/>
            <person name="Sato T."/>
            <person name="Scanlan E."/>
            <person name="Schleich S."/>
            <person name="Schroeter R."/>
            <person name="Scoffone F."/>
            <person name="Sekiguchi J."/>
            <person name="Sekowska A."/>
            <person name="Seror S.J."/>
            <person name="Serror P."/>
            <person name="Shin B.-S."/>
            <person name="Soldo B."/>
            <person name="Sorokin A."/>
            <person name="Tacconi E."/>
            <person name="Takagi T."/>
            <person name="Takahashi H."/>
            <person name="Takemaru K."/>
            <person name="Takeuchi M."/>
            <person name="Tamakoshi A."/>
            <person name="Tanaka T."/>
            <person name="Terpstra P."/>
            <person name="Tognoni A."/>
            <person name="Tosato V."/>
            <person name="Uchiyama S."/>
            <person name="Vandenbol M."/>
            <person name="Vannier F."/>
            <person name="Vassarotti A."/>
            <person name="Viari A."/>
            <person name="Wambutt R."/>
            <person name="Wedler E."/>
            <person name="Wedler H."/>
            <person name="Weitzenegger T."/>
            <person name="Winters P."/>
            <person name="Wipat A."/>
            <person name="Yamamoto H."/>
            <person name="Yamane K."/>
            <person name="Yasumoto K."/>
            <person name="Yata K."/>
            <person name="Yoshida K."/>
            <person name="Yoshikawa H.-F."/>
            <person name="Zumstein E."/>
            <person name="Yoshikawa H."/>
            <person name="Danchin A."/>
        </authorList>
    </citation>
    <scope>NUCLEOTIDE SEQUENCE [LARGE SCALE GENOMIC DNA]</scope>
    <source>
        <strain>168</strain>
    </source>
</reference>
<reference key="3">
    <citation type="journal article" date="2012" name="J. Bacteriol.">
        <title>YknWXYZ is an unusual four-component transporter with a role in protection against sporulation-delaying-protein-induced killing of Bacillus subtilis.</title>
        <authorList>
            <person name="Yamada Y."/>
            <person name="Tikhonova E.B."/>
            <person name="Zgurskaya H.I."/>
        </authorList>
    </citation>
    <scope>FUNCTION</scope>
    <scope>SUBUNIT</scope>
    <scope>SUBCELLULAR LOCATION</scope>
    <scope>INDUCTION</scope>
    <source>
        <strain>168</strain>
    </source>
</reference>
<feature type="chain" id="PRO_0000376839" description="Putative efflux system component YknX">
    <location>
        <begin position="1"/>
        <end position="377"/>
    </location>
</feature>
<feature type="transmembrane region" description="Helical" evidence="1">
    <location>
        <begin position="3"/>
        <end position="23"/>
    </location>
</feature>
<feature type="coiled-coil region" evidence="1">
    <location>
        <begin position="95"/>
        <end position="187"/>
    </location>
</feature>
<organism>
    <name type="scientific">Bacillus subtilis (strain 168)</name>
    <dbReference type="NCBI Taxonomy" id="224308"/>
    <lineage>
        <taxon>Bacteria</taxon>
        <taxon>Bacillati</taxon>
        <taxon>Bacillota</taxon>
        <taxon>Bacilli</taxon>
        <taxon>Bacillales</taxon>
        <taxon>Bacillaceae</taxon>
        <taxon>Bacillus</taxon>
    </lineage>
</organism>
<name>YKNX_BACSU</name>
<accession>O31710</accession>
<accession>Q7BVR9</accession>
<proteinExistence type="evidence at protein level"/>